<accession>Q3KFB3</accession>
<organism>
    <name type="scientific">Pseudomonas fluorescens (strain Pf0-1)</name>
    <dbReference type="NCBI Taxonomy" id="205922"/>
    <lineage>
        <taxon>Bacteria</taxon>
        <taxon>Pseudomonadati</taxon>
        <taxon>Pseudomonadota</taxon>
        <taxon>Gammaproteobacteria</taxon>
        <taxon>Pseudomonadales</taxon>
        <taxon>Pseudomonadaceae</taxon>
        <taxon>Pseudomonas</taxon>
    </lineage>
</organism>
<evidence type="ECO:0000255" key="1">
    <source>
        <dbReference type="HAMAP-Rule" id="MF_00509"/>
    </source>
</evidence>
<evidence type="ECO:0000256" key="2">
    <source>
        <dbReference type="SAM" id="MobiDB-lite"/>
    </source>
</evidence>
<proteinExistence type="inferred from homology"/>
<comment type="function">
    <text evidence="1">Essential cell division protein that stabilizes the FtsZ protofilaments by cross-linking them and that serves as a cytoplasmic membrane anchor for the Z ring. Also required for the recruitment to the septal ring of downstream cell division proteins.</text>
</comment>
<comment type="subunit">
    <text evidence="1">Interacts with FtsZ via their C-terminal domains.</text>
</comment>
<comment type="subcellular location">
    <subcellularLocation>
        <location evidence="1">Cell inner membrane</location>
        <topology evidence="1">Single-pass type I membrane protein</topology>
    </subcellularLocation>
    <text evidence="1">Localizes to the Z ring in an FtsZ-dependent manner.</text>
</comment>
<comment type="similarity">
    <text evidence="1">Belongs to the ZipA family.</text>
</comment>
<name>ZIPA_PSEPF</name>
<dbReference type="EMBL" id="CP000094">
    <property type="protein sequence ID" value="ABA73543.1"/>
    <property type="molecule type" value="Genomic_DNA"/>
</dbReference>
<dbReference type="RefSeq" id="WP_011333271.1">
    <property type="nucleotide sequence ID" value="NC_007492.2"/>
</dbReference>
<dbReference type="SMR" id="Q3KFB3"/>
<dbReference type="KEGG" id="pfo:Pfl01_1800"/>
<dbReference type="eggNOG" id="COG3115">
    <property type="taxonomic scope" value="Bacteria"/>
</dbReference>
<dbReference type="HOGENOM" id="CLU_030174_0_1_6"/>
<dbReference type="Proteomes" id="UP000002704">
    <property type="component" value="Chromosome"/>
</dbReference>
<dbReference type="GO" id="GO:0032153">
    <property type="term" value="C:cell division site"/>
    <property type="evidence" value="ECO:0007669"/>
    <property type="project" value="UniProtKB-UniRule"/>
</dbReference>
<dbReference type="GO" id="GO:0005886">
    <property type="term" value="C:plasma membrane"/>
    <property type="evidence" value="ECO:0007669"/>
    <property type="project" value="UniProtKB-SubCell"/>
</dbReference>
<dbReference type="GO" id="GO:0000917">
    <property type="term" value="P:division septum assembly"/>
    <property type="evidence" value="ECO:0007669"/>
    <property type="project" value="TreeGrafter"/>
</dbReference>
<dbReference type="GO" id="GO:0043093">
    <property type="term" value="P:FtsZ-dependent cytokinesis"/>
    <property type="evidence" value="ECO:0007669"/>
    <property type="project" value="UniProtKB-UniRule"/>
</dbReference>
<dbReference type="Gene3D" id="3.30.1400.10">
    <property type="entry name" value="ZipA, C-terminal FtsZ-binding domain"/>
    <property type="match status" value="1"/>
</dbReference>
<dbReference type="HAMAP" id="MF_00509">
    <property type="entry name" value="ZipA"/>
    <property type="match status" value="1"/>
</dbReference>
<dbReference type="InterPro" id="IPR011919">
    <property type="entry name" value="Cell_div_ZipA"/>
</dbReference>
<dbReference type="InterPro" id="IPR007449">
    <property type="entry name" value="ZipA_FtsZ-bd_C"/>
</dbReference>
<dbReference type="InterPro" id="IPR036765">
    <property type="entry name" value="ZipA_FtsZ-bd_C_sf"/>
</dbReference>
<dbReference type="NCBIfam" id="TIGR02205">
    <property type="entry name" value="septum_zipA"/>
    <property type="match status" value="1"/>
</dbReference>
<dbReference type="PANTHER" id="PTHR38685">
    <property type="entry name" value="CELL DIVISION PROTEIN ZIPA"/>
    <property type="match status" value="1"/>
</dbReference>
<dbReference type="PANTHER" id="PTHR38685:SF1">
    <property type="entry name" value="CELL DIVISION PROTEIN ZIPA"/>
    <property type="match status" value="1"/>
</dbReference>
<dbReference type="Pfam" id="PF04354">
    <property type="entry name" value="ZipA_C"/>
    <property type="match status" value="1"/>
</dbReference>
<dbReference type="SMART" id="SM00771">
    <property type="entry name" value="ZipA_C"/>
    <property type="match status" value="1"/>
</dbReference>
<dbReference type="SUPFAM" id="SSF64383">
    <property type="entry name" value="Cell-division protein ZipA, C-terminal domain"/>
    <property type="match status" value="1"/>
</dbReference>
<sequence length="288" mass="31828">MEIGLREWLIVIGIIVIAGILFDGWRRMRGGKGKLKFRLDRSLSNLPDEDTSAELLGPARVLDTHKEPQLDEHDLPSVSMPAREAREPRESGSKRGKRGGNGPAQGDLNLDLDLDGGPSFSSRDDDFVEPAAKSSPAVADKDQPQAEEVLVISVICRDPAGFKGPALLQNILESGLRFGEMDIFHRHESMAGNGEVLFSMANAVKPGIFDLDDIDHFSTPAVSFFLGLPGPRHPKQAFDVMVAAARKLSQELNGELKDDQRSVLTAQTIEHYRQRIVEFERRALTQKR</sequence>
<feature type="chain" id="PRO_0000237130" description="Cell division protein ZipA">
    <location>
        <begin position="1"/>
        <end position="288"/>
    </location>
</feature>
<feature type="topological domain" description="Periplasmic" evidence="1">
    <location>
        <position position="1"/>
    </location>
</feature>
<feature type="transmembrane region" description="Helical" evidence="1">
    <location>
        <begin position="2"/>
        <end position="22"/>
    </location>
</feature>
<feature type="topological domain" description="Cytoplasmic" evidence="1">
    <location>
        <begin position="23"/>
        <end position="288"/>
    </location>
</feature>
<feature type="region of interest" description="Disordered" evidence="2">
    <location>
        <begin position="66"/>
        <end position="141"/>
    </location>
</feature>
<feature type="compositionally biased region" description="Basic and acidic residues" evidence="2">
    <location>
        <begin position="66"/>
        <end position="75"/>
    </location>
</feature>
<feature type="compositionally biased region" description="Basic and acidic residues" evidence="2">
    <location>
        <begin position="83"/>
        <end position="93"/>
    </location>
</feature>
<feature type="compositionally biased region" description="Low complexity" evidence="2">
    <location>
        <begin position="106"/>
        <end position="117"/>
    </location>
</feature>
<gene>
    <name evidence="1" type="primary">zipA</name>
    <name type="ordered locus">Pfl01_1800</name>
</gene>
<reference key="1">
    <citation type="journal article" date="2009" name="Genome Biol.">
        <title>Genomic and genetic analyses of diversity and plant interactions of Pseudomonas fluorescens.</title>
        <authorList>
            <person name="Silby M.W."/>
            <person name="Cerdeno-Tarraga A.M."/>
            <person name="Vernikos G.S."/>
            <person name="Giddens S.R."/>
            <person name="Jackson R.W."/>
            <person name="Preston G.M."/>
            <person name="Zhang X.-X."/>
            <person name="Moon C.D."/>
            <person name="Gehrig S.M."/>
            <person name="Godfrey S.A.C."/>
            <person name="Knight C.G."/>
            <person name="Malone J.G."/>
            <person name="Robinson Z."/>
            <person name="Spiers A.J."/>
            <person name="Harris S."/>
            <person name="Challis G.L."/>
            <person name="Yaxley A.M."/>
            <person name="Harris D."/>
            <person name="Seeger K."/>
            <person name="Murphy L."/>
            <person name="Rutter S."/>
            <person name="Squares R."/>
            <person name="Quail M.A."/>
            <person name="Saunders E."/>
            <person name="Mavromatis K."/>
            <person name="Brettin T.S."/>
            <person name="Bentley S.D."/>
            <person name="Hothersall J."/>
            <person name="Stephens E."/>
            <person name="Thomas C.M."/>
            <person name="Parkhill J."/>
            <person name="Levy S.B."/>
            <person name="Rainey P.B."/>
            <person name="Thomson N.R."/>
        </authorList>
    </citation>
    <scope>NUCLEOTIDE SEQUENCE [LARGE SCALE GENOMIC DNA]</scope>
    <source>
        <strain>Pf0-1</strain>
    </source>
</reference>
<keyword id="KW-0131">Cell cycle</keyword>
<keyword id="KW-0132">Cell division</keyword>
<keyword id="KW-0997">Cell inner membrane</keyword>
<keyword id="KW-1003">Cell membrane</keyword>
<keyword id="KW-0472">Membrane</keyword>
<keyword id="KW-0812">Transmembrane</keyword>
<keyword id="KW-1133">Transmembrane helix</keyword>
<protein>
    <recommendedName>
        <fullName evidence="1">Cell division protein ZipA</fullName>
    </recommendedName>
</protein>